<accession>Q49VV9</accession>
<organism>
    <name type="scientific">Staphylococcus saprophyticus subsp. saprophyticus (strain ATCC 15305 / DSM 20229 / NCIMB 8711 / NCTC 7292 / S-41)</name>
    <dbReference type="NCBI Taxonomy" id="342451"/>
    <lineage>
        <taxon>Bacteria</taxon>
        <taxon>Bacillati</taxon>
        <taxon>Bacillota</taxon>
        <taxon>Bacilli</taxon>
        <taxon>Bacillales</taxon>
        <taxon>Staphylococcaceae</taxon>
        <taxon>Staphylococcus</taxon>
    </lineage>
</organism>
<sequence length="278" mass="31703">MMTLSYIDPIAFELGPISVRWYGIIIAMGILLGYFIAQASVKRIGFHQDTLVDIIFWSAIFGFIIARIYFVIFQWPYYVQHPIEIPMIWQGGIAIHGGLIGGFVTGIIICKQKNINPFQIGDVIAPSMILGQGIGRWGNFMNHEAHGGTVSKSFLENLHIPDFIINNMYIDGKYYQPTFLYESIWDVLGFVILILLRKHLRIGDTFCLYLIWYSIGRFFVEGMRTDSLMLAGDIRIAQLMSIILIIIGVVIMIVRRVKYDAPRYKAVGPLSWPSKEVK</sequence>
<feature type="chain" id="PRO_1000053507" description="Phosphatidylglycerol--prolipoprotein diacylglyceryl transferase">
    <location>
        <begin position="1"/>
        <end position="278"/>
    </location>
</feature>
<feature type="transmembrane region" description="Helical" evidence="1">
    <location>
        <begin position="21"/>
        <end position="41"/>
    </location>
</feature>
<feature type="transmembrane region" description="Helical" evidence="1">
    <location>
        <begin position="54"/>
        <end position="74"/>
    </location>
</feature>
<feature type="transmembrane region" description="Helical" evidence="1">
    <location>
        <begin position="88"/>
        <end position="108"/>
    </location>
</feature>
<feature type="transmembrane region" description="Helical" evidence="1">
    <location>
        <begin position="176"/>
        <end position="196"/>
    </location>
</feature>
<feature type="transmembrane region" description="Helical" evidence="1">
    <location>
        <begin position="202"/>
        <end position="222"/>
    </location>
</feature>
<feature type="transmembrane region" description="Helical" evidence="1">
    <location>
        <begin position="234"/>
        <end position="254"/>
    </location>
</feature>
<feature type="binding site" evidence="1">
    <location>
        <position position="136"/>
    </location>
    <ligand>
        <name>a 1,2-diacyl-sn-glycero-3-phospho-(1'-sn-glycerol)</name>
        <dbReference type="ChEBI" id="CHEBI:64716"/>
    </ligand>
</feature>
<proteinExistence type="inferred from homology"/>
<evidence type="ECO:0000255" key="1">
    <source>
        <dbReference type="HAMAP-Rule" id="MF_01147"/>
    </source>
</evidence>
<name>LGT_STAS1</name>
<dbReference type="EC" id="2.5.1.145" evidence="1"/>
<dbReference type="EMBL" id="AP008934">
    <property type="protein sequence ID" value="BAE19101.1"/>
    <property type="molecule type" value="Genomic_DNA"/>
</dbReference>
<dbReference type="RefSeq" id="WP_011303625.1">
    <property type="nucleotide sequence ID" value="NZ_MTGA01000039.1"/>
</dbReference>
<dbReference type="SMR" id="Q49VV9"/>
<dbReference type="GeneID" id="3616767"/>
<dbReference type="KEGG" id="ssp:SSP1956"/>
<dbReference type="PATRIC" id="fig|342451.11.peg.1949"/>
<dbReference type="eggNOG" id="COG0682">
    <property type="taxonomic scope" value="Bacteria"/>
</dbReference>
<dbReference type="HOGENOM" id="CLU_013386_1_2_9"/>
<dbReference type="OrthoDB" id="871140at2"/>
<dbReference type="UniPathway" id="UPA00664"/>
<dbReference type="Proteomes" id="UP000006371">
    <property type="component" value="Chromosome"/>
</dbReference>
<dbReference type="GO" id="GO:0005886">
    <property type="term" value="C:plasma membrane"/>
    <property type="evidence" value="ECO:0007669"/>
    <property type="project" value="UniProtKB-SubCell"/>
</dbReference>
<dbReference type="GO" id="GO:0008961">
    <property type="term" value="F:phosphatidylglycerol-prolipoprotein diacylglyceryl transferase activity"/>
    <property type="evidence" value="ECO:0007669"/>
    <property type="project" value="UniProtKB-UniRule"/>
</dbReference>
<dbReference type="GO" id="GO:0042158">
    <property type="term" value="P:lipoprotein biosynthetic process"/>
    <property type="evidence" value="ECO:0007669"/>
    <property type="project" value="UniProtKB-UniRule"/>
</dbReference>
<dbReference type="HAMAP" id="MF_01147">
    <property type="entry name" value="Lgt"/>
    <property type="match status" value="1"/>
</dbReference>
<dbReference type="InterPro" id="IPR001640">
    <property type="entry name" value="Lgt"/>
</dbReference>
<dbReference type="NCBIfam" id="TIGR00544">
    <property type="entry name" value="lgt"/>
    <property type="match status" value="1"/>
</dbReference>
<dbReference type="PANTHER" id="PTHR30589:SF0">
    <property type="entry name" value="PHOSPHATIDYLGLYCEROL--PROLIPOPROTEIN DIACYLGLYCERYL TRANSFERASE"/>
    <property type="match status" value="1"/>
</dbReference>
<dbReference type="PANTHER" id="PTHR30589">
    <property type="entry name" value="PROLIPOPROTEIN DIACYLGLYCERYL TRANSFERASE"/>
    <property type="match status" value="1"/>
</dbReference>
<dbReference type="Pfam" id="PF01790">
    <property type="entry name" value="LGT"/>
    <property type="match status" value="1"/>
</dbReference>
<dbReference type="PROSITE" id="PS01311">
    <property type="entry name" value="LGT"/>
    <property type="match status" value="1"/>
</dbReference>
<comment type="function">
    <text evidence="1">Catalyzes the transfer of the diacylglyceryl group from phosphatidylglycerol to the sulfhydryl group of the N-terminal cysteine of a prolipoprotein, the first step in the formation of mature lipoproteins.</text>
</comment>
<comment type="catalytic activity">
    <reaction evidence="1">
        <text>L-cysteinyl-[prolipoprotein] + a 1,2-diacyl-sn-glycero-3-phospho-(1'-sn-glycerol) = an S-1,2-diacyl-sn-glyceryl-L-cysteinyl-[prolipoprotein] + sn-glycerol 1-phosphate + H(+)</text>
        <dbReference type="Rhea" id="RHEA:56712"/>
        <dbReference type="Rhea" id="RHEA-COMP:14679"/>
        <dbReference type="Rhea" id="RHEA-COMP:14680"/>
        <dbReference type="ChEBI" id="CHEBI:15378"/>
        <dbReference type="ChEBI" id="CHEBI:29950"/>
        <dbReference type="ChEBI" id="CHEBI:57685"/>
        <dbReference type="ChEBI" id="CHEBI:64716"/>
        <dbReference type="ChEBI" id="CHEBI:140658"/>
        <dbReference type="EC" id="2.5.1.145"/>
    </reaction>
</comment>
<comment type="pathway">
    <text evidence="1">Protein modification; lipoprotein biosynthesis (diacylglyceryl transfer).</text>
</comment>
<comment type="subcellular location">
    <subcellularLocation>
        <location evidence="1">Cell membrane</location>
        <topology evidence="1">Multi-pass membrane protein</topology>
    </subcellularLocation>
</comment>
<comment type="similarity">
    <text evidence="1">Belongs to the Lgt family.</text>
</comment>
<reference key="1">
    <citation type="journal article" date="2005" name="Proc. Natl. Acad. Sci. U.S.A.">
        <title>Whole genome sequence of Staphylococcus saprophyticus reveals the pathogenesis of uncomplicated urinary tract infection.</title>
        <authorList>
            <person name="Kuroda M."/>
            <person name="Yamashita A."/>
            <person name="Hirakawa H."/>
            <person name="Kumano M."/>
            <person name="Morikawa K."/>
            <person name="Higashide M."/>
            <person name="Maruyama A."/>
            <person name="Inose Y."/>
            <person name="Matoba K."/>
            <person name="Toh H."/>
            <person name="Kuhara S."/>
            <person name="Hattori M."/>
            <person name="Ohta T."/>
        </authorList>
    </citation>
    <scope>NUCLEOTIDE SEQUENCE [LARGE SCALE GENOMIC DNA]</scope>
    <source>
        <strain>ATCC 15305 / DSM 20229 / NCIMB 8711 / NCTC 7292 / S-41</strain>
    </source>
</reference>
<protein>
    <recommendedName>
        <fullName evidence="1">Phosphatidylglycerol--prolipoprotein diacylglyceryl transferase</fullName>
        <ecNumber evidence="1">2.5.1.145</ecNumber>
    </recommendedName>
</protein>
<keyword id="KW-1003">Cell membrane</keyword>
<keyword id="KW-0472">Membrane</keyword>
<keyword id="KW-1185">Reference proteome</keyword>
<keyword id="KW-0808">Transferase</keyword>
<keyword id="KW-0812">Transmembrane</keyword>
<keyword id="KW-1133">Transmembrane helix</keyword>
<gene>
    <name evidence="1" type="primary">lgt</name>
    <name type="ordered locus">SSP1956</name>
</gene>